<reference key="1">
    <citation type="submission" date="2004-09" db="EMBL/GenBank/DDBJ databases">
        <authorList>
            <consortium name="NIH - Xenopus Gene Collection (XGC) project"/>
        </authorList>
    </citation>
    <scope>NUCLEOTIDE SEQUENCE [LARGE SCALE MRNA]</scope>
</reference>
<reference key="2">
    <citation type="journal article" date="2003" name="J. Mol. Evol.">
        <title>Selective pressure on the allantoicase gene during vertebrate evolution.</title>
        <authorList>
            <person name="Vigetti D."/>
            <person name="Binelli G."/>
            <person name="Monetti C."/>
            <person name="Prati M."/>
            <person name="Bernardini G."/>
            <person name="Gornati R."/>
        </authorList>
    </citation>
    <scope>NUCLEOTIDE SEQUENCE [MRNA] OF 66-258</scope>
</reference>
<keyword id="KW-0378">Hydrolase</keyword>
<keyword id="KW-0659">Purine metabolism</keyword>
<keyword id="KW-1185">Reference proteome</keyword>
<proteinExistence type="evidence at transcript level"/>
<sequence length="389" mass="43618">MSAPPKENIGLPVSEFVQMNNLACESVGGKVLFATDDCFAPAENLLKKKDPEFKPGLFTEFGKWMDGWETRRKRIPGHDWCIIELGVPGIIHGFEADTRFFTGNYAPRISVQAACLKPEEITFQPRKDKIGTAASIEEYKSADKLKSEKWSHLLQMTELTPGYAESSHSYFNVNSKQRWTHLRLNIYPDGGIARFKVYGIGQRDWSSCKPNDLEDLLSMVNGGVCLGFSDAHYGHPRNLIGIGRACDMGDGWETARRLDRPPVLKADSKGILQVPGFEWAVLKLGHPGLVTHIEIDTNHFKGNSPNSCKIDACALTPTEEEGVKRDERFEIGYNWKPLLSVTQIHPHKRRYVESTSLALHQVISHVKITIAPDGGVSRIRLWGFPRPLP</sequence>
<accession>Q640T1</accession>
<accession>Q8JHV2</accession>
<dbReference type="EC" id="3.5.3.4"/>
<dbReference type="EMBL" id="BC082508">
    <property type="protein sequence ID" value="AAH82508.1"/>
    <property type="molecule type" value="mRNA"/>
</dbReference>
<dbReference type="EMBL" id="AF480058">
    <property type="protein sequence ID" value="AAM74031.1"/>
    <property type="molecule type" value="mRNA"/>
</dbReference>
<dbReference type="RefSeq" id="NP_001162026.1">
    <property type="nucleotide sequence ID" value="NM_001168554.1"/>
</dbReference>
<dbReference type="SMR" id="Q640T1"/>
<dbReference type="FunCoup" id="Q640T1">
    <property type="interactions" value="117"/>
</dbReference>
<dbReference type="STRING" id="8364.ENSXETP00000018336"/>
<dbReference type="PaxDb" id="8364-ENSXETP00000002586"/>
<dbReference type="GeneID" id="394447"/>
<dbReference type="KEGG" id="xtr:394447"/>
<dbReference type="AGR" id="Xenbase:XB-GENE-1002643"/>
<dbReference type="CTD" id="55821"/>
<dbReference type="Xenbase" id="XB-GENE-1002643">
    <property type="gene designation" value="allc"/>
</dbReference>
<dbReference type="eggNOG" id="KOG4145">
    <property type="taxonomic scope" value="Eukaryota"/>
</dbReference>
<dbReference type="InParanoid" id="Q640T1"/>
<dbReference type="OMA" id="MDDGWET"/>
<dbReference type="OrthoDB" id="10266039at2759"/>
<dbReference type="UniPathway" id="UPA00395">
    <property type="reaction ID" value="UER00654"/>
</dbReference>
<dbReference type="Proteomes" id="UP000008143">
    <property type="component" value="Chromosome 5"/>
</dbReference>
<dbReference type="GO" id="GO:0004037">
    <property type="term" value="F:allantoicase activity"/>
    <property type="evidence" value="ECO:0007669"/>
    <property type="project" value="UniProtKB-EC"/>
</dbReference>
<dbReference type="GO" id="GO:0000256">
    <property type="term" value="P:allantoin catabolic process"/>
    <property type="evidence" value="ECO:0007669"/>
    <property type="project" value="UniProtKB-UniPathway"/>
</dbReference>
<dbReference type="GO" id="GO:0006144">
    <property type="term" value="P:purine nucleobase metabolic process"/>
    <property type="evidence" value="ECO:0007669"/>
    <property type="project" value="UniProtKB-KW"/>
</dbReference>
<dbReference type="FunFam" id="2.60.120.260:FF:000077">
    <property type="entry name" value="Probable allantoicase"/>
    <property type="match status" value="1"/>
</dbReference>
<dbReference type="FunFam" id="2.60.120.260:FF:000085">
    <property type="entry name" value="probable allantoicase"/>
    <property type="match status" value="1"/>
</dbReference>
<dbReference type="Gene3D" id="2.60.120.260">
    <property type="entry name" value="Galactose-binding domain-like"/>
    <property type="match status" value="2"/>
</dbReference>
<dbReference type="HAMAP" id="MF_00813">
    <property type="entry name" value="Allantoicase"/>
    <property type="match status" value="1"/>
</dbReference>
<dbReference type="InterPro" id="IPR005164">
    <property type="entry name" value="Allantoicase"/>
</dbReference>
<dbReference type="InterPro" id="IPR015908">
    <property type="entry name" value="Allantoicase_dom"/>
</dbReference>
<dbReference type="InterPro" id="IPR008979">
    <property type="entry name" value="Galactose-bd-like_sf"/>
</dbReference>
<dbReference type="NCBIfam" id="TIGR02961">
    <property type="entry name" value="allantoicase"/>
    <property type="match status" value="1"/>
</dbReference>
<dbReference type="PANTHER" id="PTHR12045">
    <property type="entry name" value="ALLANTOICASE"/>
    <property type="match status" value="1"/>
</dbReference>
<dbReference type="PANTHER" id="PTHR12045:SF3">
    <property type="entry name" value="INACTIVE ALLANTOICASE-RELATED"/>
    <property type="match status" value="1"/>
</dbReference>
<dbReference type="Pfam" id="PF03561">
    <property type="entry name" value="Allantoicase"/>
    <property type="match status" value="2"/>
</dbReference>
<dbReference type="PIRSF" id="PIRSF016516">
    <property type="entry name" value="Allantoicase"/>
    <property type="match status" value="1"/>
</dbReference>
<dbReference type="SUPFAM" id="SSF49785">
    <property type="entry name" value="Galactose-binding domain-like"/>
    <property type="match status" value="2"/>
</dbReference>
<protein>
    <recommendedName>
        <fullName>Allantoicase</fullName>
        <ecNumber>3.5.3.4</ecNumber>
    </recommendedName>
    <alternativeName>
        <fullName>Allantoate amidinohydrolase</fullName>
    </alternativeName>
</protein>
<organism>
    <name type="scientific">Xenopus tropicalis</name>
    <name type="common">Western clawed frog</name>
    <name type="synonym">Silurana tropicalis</name>
    <dbReference type="NCBI Taxonomy" id="8364"/>
    <lineage>
        <taxon>Eukaryota</taxon>
        <taxon>Metazoa</taxon>
        <taxon>Chordata</taxon>
        <taxon>Craniata</taxon>
        <taxon>Vertebrata</taxon>
        <taxon>Euteleostomi</taxon>
        <taxon>Amphibia</taxon>
        <taxon>Batrachia</taxon>
        <taxon>Anura</taxon>
        <taxon>Pipoidea</taxon>
        <taxon>Pipidae</taxon>
        <taxon>Xenopodinae</taxon>
        <taxon>Xenopus</taxon>
        <taxon>Silurana</taxon>
    </lineage>
</organism>
<evidence type="ECO:0000250" key="1"/>
<evidence type="ECO:0000305" key="2"/>
<name>ALLC_XENTR</name>
<feature type="chain" id="PRO_0000205911" description="Allantoicase">
    <location>
        <begin position="1"/>
        <end position="389"/>
    </location>
</feature>
<feature type="sequence conflict" description="In Ref. 2; AAM74031." evidence="2" ref="2">
    <original>R</original>
    <variation>S</variation>
    <location>
        <position position="257"/>
    </location>
</feature>
<gene>
    <name type="primary">allc</name>
</gene>
<comment type="function">
    <text evidence="1">Utilization of purines as secondary nitrogen sources, when primary sources are limiting.</text>
</comment>
<comment type="catalytic activity">
    <reaction>
        <text>allantoate + H2O = (S)-ureidoglycolate + urea</text>
        <dbReference type="Rhea" id="RHEA:11016"/>
        <dbReference type="ChEBI" id="CHEBI:15377"/>
        <dbReference type="ChEBI" id="CHEBI:16199"/>
        <dbReference type="ChEBI" id="CHEBI:17536"/>
        <dbReference type="ChEBI" id="CHEBI:57296"/>
        <dbReference type="EC" id="3.5.3.4"/>
    </reaction>
</comment>
<comment type="pathway">
    <text>Nitrogen metabolism; (S)-allantoin degradation; (S)-ureidoglycolate from allantoate (aminidohydrolase route): step 1/1.</text>
</comment>
<comment type="similarity">
    <text evidence="2">Belongs to the allantoicase family.</text>
</comment>